<dbReference type="EC" id="4.2.3.47" evidence="1"/>
<dbReference type="EMBL" id="AZNG01000003">
    <property type="protein sequence ID" value="KID77563.1"/>
    <property type="molecule type" value="Genomic_DNA"/>
</dbReference>
<dbReference type="SMR" id="A0A0B4G504"/>
<dbReference type="GeneID" id="26241152"/>
<dbReference type="KEGG" id="mbrn:26241152"/>
<dbReference type="HOGENOM" id="CLU_052212_0_0_1"/>
<dbReference type="OrthoDB" id="1574at5529"/>
<dbReference type="GO" id="GO:0016838">
    <property type="term" value="F:carbon-oxygen lyase activity, acting on phosphates"/>
    <property type="evidence" value="ECO:0007669"/>
    <property type="project" value="InterPro"/>
</dbReference>
<dbReference type="Gene3D" id="1.10.600.10">
    <property type="entry name" value="Farnesyl Diphosphate Synthase"/>
    <property type="match status" value="1"/>
</dbReference>
<dbReference type="InterPro" id="IPR008949">
    <property type="entry name" value="Isoprenoid_synthase_dom_sf"/>
</dbReference>
<dbReference type="InterPro" id="IPR024652">
    <property type="entry name" value="Trichodiene_synth"/>
</dbReference>
<dbReference type="Pfam" id="PF06330">
    <property type="entry name" value="TRI5"/>
    <property type="match status" value="1"/>
</dbReference>
<dbReference type="SUPFAM" id="SSF48576">
    <property type="entry name" value="Terpenoid synthases"/>
    <property type="match status" value="1"/>
</dbReference>
<organism>
    <name type="scientific">Metarhizium brunneum (strain ARSEF 3297)</name>
    <dbReference type="NCBI Taxonomy" id="1276141"/>
    <lineage>
        <taxon>Eukaryota</taxon>
        <taxon>Fungi</taxon>
        <taxon>Dikarya</taxon>
        <taxon>Ascomycota</taxon>
        <taxon>Pezizomycotina</taxon>
        <taxon>Sordariomycetes</taxon>
        <taxon>Hypocreomycetidae</taxon>
        <taxon>Hypocreales</taxon>
        <taxon>Clavicipitaceae</taxon>
        <taxon>Metarhizium</taxon>
    </lineage>
</organism>
<gene>
    <name type="ORF">MBR_03882</name>
</gene>
<accession>A0A0B4G504</accession>
<sequence>METDSFKRQYADILRRYLCGISYQKLSCEYDPSIEETVVQHFRTLNFPNDFLKRMMPIIHASAWIATSTYPFTPRHVQEAIAVYTSLAIAIEDTSKESTHDLKRFQQRLFNRQPQPNLLLQAMVDCLVSLRGIYGPFICDMVAKSTAEYISVCAFEAKYDGTLRPTPSSPDFPYYLRLKTGVAEVYAFFAFPEVLYPEEAFLHEYILAVPDISRYFNLGNDLLSFYKESIVADERLNYIYNCSRVSNSTPLESIWSTHLALITCVENIRKTLSASPQMRRNIDQLINGYVMYHFGASRYKLSDLGIQEVDELRAKICCSTTVDNGVGAYKH</sequence>
<proteinExistence type="evidence at protein level"/>
<evidence type="ECO:0000269" key="1">
    <source>
    </source>
</evidence>
<evidence type="ECO:0000303" key="2">
    <source>
    </source>
</evidence>
<evidence type="ECO:0000305" key="3"/>
<protein>
    <recommendedName>
        <fullName evidence="2">(E)-beta farnesene synthase MBR_03882</fullName>
        <ecNumber evidence="1">4.2.3.47</ecNumber>
    </recommendedName>
    <alternativeName>
        <fullName evidence="2">Typical fungal terpene synthase MBR_03882</fullName>
    </alternativeName>
</protein>
<feature type="chain" id="PRO_0000451045" description="(E)-beta farnesene synthase MBR_03882">
    <location>
        <begin position="1"/>
        <end position="331"/>
    </location>
</feature>
<name>TPS1_METBS</name>
<reference key="1">
    <citation type="journal article" date="2014" name="Proc. Natl. Acad. Sci. U.S.A.">
        <title>Trajectory and genomic determinants of fungal-pathogen speciation and host adaptation.</title>
        <authorList>
            <person name="Hu X."/>
            <person name="Xiao G."/>
            <person name="Zheng P."/>
            <person name="Shang Y."/>
            <person name="Su Y."/>
            <person name="Zhang X."/>
            <person name="Liu X."/>
            <person name="Zhan S."/>
            <person name="St Leger R.J."/>
            <person name="Wang C."/>
        </authorList>
    </citation>
    <scope>NUCLEOTIDE SEQUENCE [LARGE SCALE GENOMIC DNA]</scope>
    <source>
        <strain>ARSEF 3297</strain>
    </source>
</reference>
<reference key="2">
    <citation type="journal article" date="2019" name="Sci. Rep.">
        <title>Terpene synthase genes originated from bacteria through horizontal gene transfer contribute to terpenoid diversity in fungi.</title>
        <authorList>
            <person name="Jia Q."/>
            <person name="Chen X."/>
            <person name="Koellner T.G."/>
            <person name="Rinkel J."/>
            <person name="Fu J."/>
            <person name="Labbe J."/>
            <person name="Xiong W."/>
            <person name="Dickschat J.S."/>
            <person name="Gershenzon J."/>
            <person name="Chen F."/>
        </authorList>
    </citation>
    <scope>FUNCTION</scope>
    <scope>CATALYTIC ACTIVITY</scope>
</reference>
<comment type="function">
    <text evidence="1">Terpene synthase that catalyzes the conversion of (2E,6E)-farnesyl diphosphate (FPP) into the volatile sesquiterpene (E)-beta-farnesene.</text>
</comment>
<comment type="catalytic activity">
    <reaction evidence="1">
        <text>(2E,6E)-farnesyl diphosphate = (E)-beta-farnesene + diphosphate</text>
        <dbReference type="Rhea" id="RHEA:27425"/>
        <dbReference type="ChEBI" id="CHEBI:10418"/>
        <dbReference type="ChEBI" id="CHEBI:33019"/>
        <dbReference type="ChEBI" id="CHEBI:175763"/>
        <dbReference type="EC" id="4.2.3.47"/>
    </reaction>
    <physiologicalReaction direction="left-to-right" evidence="1">
        <dbReference type="Rhea" id="RHEA:27426"/>
    </physiologicalReaction>
</comment>
<comment type="similarity">
    <text evidence="3">Belongs to the trichodiene synthase family.</text>
</comment>
<keyword id="KW-0456">Lyase</keyword>